<gene>
    <name type="primary">scrB</name>
</gene>
<comment type="catalytic activity">
    <reaction evidence="2">
        <text>Hydrolysis of terminal non-reducing beta-D-fructofuranoside residues in beta-D-fructofuranosides.</text>
        <dbReference type="EC" id="3.2.1.26"/>
    </reaction>
</comment>
<comment type="pathway">
    <text>Glycan biosynthesis; sucrose metabolism.</text>
</comment>
<comment type="similarity">
    <text evidence="3">Belongs to the glycosyl hydrolase 32 family.</text>
</comment>
<comment type="sequence caution" evidence="3">
    <conflict type="frameshift">
        <sequence resource="EMBL-CDS" id="AAA25568"/>
    </conflict>
</comment>
<comment type="sequence caution" evidence="3">
    <conflict type="frameshift">
        <sequence resource="EMBL-CDS" id="CAA83669"/>
    </conflict>
</comment>
<dbReference type="EC" id="3.2.1.26"/>
<dbReference type="EMBL" id="Z32771">
    <property type="protein sequence ID" value="CAA83669.1"/>
    <property type="status" value="ALT_FRAME"/>
    <property type="molecule type" value="Genomic_DNA"/>
</dbReference>
<dbReference type="EMBL" id="L32093">
    <property type="protein sequence ID" value="AAA25568.1"/>
    <property type="status" value="ALT_FRAME"/>
    <property type="molecule type" value="Genomic_DNA"/>
</dbReference>
<dbReference type="PIR" id="S44258">
    <property type="entry name" value="S44258"/>
</dbReference>
<dbReference type="RefSeq" id="WP_011673113.1">
    <property type="nucleotide sequence ID" value="NZ_WEOZ01000006.1"/>
</dbReference>
<dbReference type="SMR" id="P43471"/>
<dbReference type="CAZy" id="GH32">
    <property type="family name" value="Glycoside Hydrolase Family 32"/>
</dbReference>
<dbReference type="OMA" id="IMYTGNV"/>
<dbReference type="UniPathway" id="UPA00238"/>
<dbReference type="GO" id="GO:0005737">
    <property type="term" value="C:cytoplasm"/>
    <property type="evidence" value="ECO:0007669"/>
    <property type="project" value="InterPro"/>
</dbReference>
<dbReference type="GO" id="GO:0004564">
    <property type="term" value="F:beta-fructofuranosidase activity"/>
    <property type="evidence" value="ECO:0007669"/>
    <property type="project" value="UniProtKB-EC"/>
</dbReference>
<dbReference type="GO" id="GO:0005985">
    <property type="term" value="P:sucrose metabolic process"/>
    <property type="evidence" value="ECO:0007669"/>
    <property type="project" value="UniProtKB-UniPathway"/>
</dbReference>
<dbReference type="CDD" id="cd18623">
    <property type="entry name" value="GH32_ScrB-like"/>
    <property type="match status" value="1"/>
</dbReference>
<dbReference type="Gene3D" id="2.60.120.560">
    <property type="entry name" value="Exo-inulinase, domain 1"/>
    <property type="match status" value="1"/>
</dbReference>
<dbReference type="Gene3D" id="2.115.10.20">
    <property type="entry name" value="Glycosyl hydrolase domain, family 43"/>
    <property type="match status" value="1"/>
</dbReference>
<dbReference type="InterPro" id="IPR013320">
    <property type="entry name" value="ConA-like_dom_sf"/>
</dbReference>
<dbReference type="InterPro" id="IPR051214">
    <property type="entry name" value="GH32_Enzymes"/>
</dbReference>
<dbReference type="InterPro" id="IPR001362">
    <property type="entry name" value="Glyco_hydro_32"/>
</dbReference>
<dbReference type="InterPro" id="IPR018053">
    <property type="entry name" value="Glyco_hydro_32_AS"/>
</dbReference>
<dbReference type="InterPro" id="IPR013189">
    <property type="entry name" value="Glyco_hydro_32_C"/>
</dbReference>
<dbReference type="InterPro" id="IPR013148">
    <property type="entry name" value="Glyco_hydro_32_N"/>
</dbReference>
<dbReference type="InterPro" id="IPR023296">
    <property type="entry name" value="Glyco_hydro_beta-prop_sf"/>
</dbReference>
<dbReference type="InterPro" id="IPR006232">
    <property type="entry name" value="Suc6P_hydrolase"/>
</dbReference>
<dbReference type="NCBIfam" id="TIGR01322">
    <property type="entry name" value="scrB_fam"/>
    <property type="match status" value="1"/>
</dbReference>
<dbReference type="PANTHER" id="PTHR43101">
    <property type="entry name" value="BETA-FRUCTOSIDASE"/>
    <property type="match status" value="1"/>
</dbReference>
<dbReference type="PANTHER" id="PTHR43101:SF1">
    <property type="entry name" value="BETA-FRUCTOSIDASE"/>
    <property type="match status" value="1"/>
</dbReference>
<dbReference type="Pfam" id="PF08244">
    <property type="entry name" value="Glyco_hydro_32C"/>
    <property type="match status" value="1"/>
</dbReference>
<dbReference type="Pfam" id="PF00251">
    <property type="entry name" value="Glyco_hydro_32N"/>
    <property type="match status" value="1"/>
</dbReference>
<dbReference type="SMART" id="SM00640">
    <property type="entry name" value="Glyco_32"/>
    <property type="match status" value="1"/>
</dbReference>
<dbReference type="SUPFAM" id="SSF75005">
    <property type="entry name" value="Arabinanase/levansucrase/invertase"/>
    <property type="match status" value="1"/>
</dbReference>
<dbReference type="SUPFAM" id="SSF49899">
    <property type="entry name" value="Concanavalin A-like lectins/glucanases"/>
    <property type="match status" value="1"/>
</dbReference>
<dbReference type="PROSITE" id="PS00609">
    <property type="entry name" value="GLYCOSYL_HYDROL_F32"/>
    <property type="match status" value="1"/>
</dbReference>
<evidence type="ECO:0000250" key="1"/>
<evidence type="ECO:0000255" key="2">
    <source>
        <dbReference type="PROSITE-ProRule" id="PRU10067"/>
    </source>
</evidence>
<evidence type="ECO:0000305" key="3"/>
<sequence>MIWNRKTRYTPYEQWPATKLPQLVAQARQSKWRMQHHIQPTSGLLNDPNGFSYFDGQWHLFYQVFPFGPVHGLKSWQHVTSKNLVDWHDEGLAIRPDTPYDSHGAYTGTALPIDDQLFIMYTGNVRTADWQRESYQLGAWMDTDNHIKKLSRPLIAHAPAGYTSSFRDPDLIRNDHGYYALIGAQTTTEIGAILVYFSKDLTTWTCQGELNVPANARGYMIECPNLVWIDQQPVLLFCPQGLSQATIPYQNIYPNMYLVADQLNLAQAQFTEPHALTQLDDGFDVYATQAINAPDGRALAVSWIGLPEISYPTDRENWAHCLSLVKELTLKDGHLYQNPVAAVDDLRTTAHDLVFEQQRATVAALNGSFELLLTVPADKTVTVNIADQQESGQLQVTVDANHGQVMIDRRHTGNSFAEDYGQTRQVELTAHKTIKIRLIIDVSVFECYIDNGYSVMTGRFFLNATPSRLNVQGDTTAVTGKVWEWRQSEHTGVDNNETKIK</sequence>
<protein>
    <recommendedName>
        <fullName>Sucrose-6-phosphate hydrolase</fullName>
        <shortName>Sucrase</shortName>
        <ecNumber>3.2.1.26</ecNumber>
    </recommendedName>
    <alternativeName>
        <fullName>Invertase</fullName>
    </alternativeName>
</protein>
<accession>P43471</accession>
<organism>
    <name type="scientific">Pediococcus pentosaceus</name>
    <dbReference type="NCBI Taxonomy" id="1255"/>
    <lineage>
        <taxon>Bacteria</taxon>
        <taxon>Bacillati</taxon>
        <taxon>Bacillota</taxon>
        <taxon>Bacilli</taxon>
        <taxon>Lactobacillales</taxon>
        <taxon>Lactobacillaceae</taxon>
        <taxon>Pediococcus</taxon>
    </lineage>
</organism>
<reference key="1">
    <citation type="submission" date="1994-04" db="EMBL/GenBank/DDBJ databases">
        <title>The sucrose and raffinose operons of Pediococcus pentosaceus PPE1.0.</title>
        <authorList>
            <person name="Leenhouts K.K.J."/>
            <person name="Bolhuis A.A."/>
            <person name="Kok J.J."/>
            <person name="Venema G.G."/>
        </authorList>
    </citation>
    <scope>NUCLEOTIDE SEQUENCE [GENOMIC DNA]</scope>
    <source>
        <strain>PPE1.0</strain>
    </source>
</reference>
<reference key="2">
    <citation type="journal article" date="2001" name="Mol. Biol. (Mosk.)">
        <title>Molecular structure of the Lactobacillus plantarum sucrose utilization locus: comparison with Pediococcus pentosaceus.</title>
        <authorList>
            <person name="Naumoff D.G."/>
            <person name="Livshits V.A."/>
        </authorList>
    </citation>
    <scope>IDENTIFICATION OF FRAMESHIFTS</scope>
</reference>
<feature type="chain" id="PRO_0000169874" description="Sucrose-6-phosphate hydrolase">
    <location>
        <begin position="1"/>
        <end position="501"/>
    </location>
</feature>
<feature type="active site" evidence="2">
    <location>
        <position position="47"/>
    </location>
</feature>
<feature type="binding site" evidence="1">
    <location>
        <begin position="44"/>
        <end position="47"/>
    </location>
    <ligand>
        <name>substrate</name>
    </ligand>
</feature>
<feature type="binding site" evidence="1">
    <location>
        <position position="63"/>
    </location>
    <ligand>
        <name>substrate</name>
    </ligand>
</feature>
<feature type="binding site" evidence="1">
    <location>
        <begin position="106"/>
        <end position="107"/>
    </location>
    <ligand>
        <name>substrate</name>
    </ligand>
</feature>
<feature type="binding site" evidence="1">
    <location>
        <begin position="167"/>
        <end position="168"/>
    </location>
    <ligand>
        <name>substrate</name>
    </ligand>
</feature>
<feature type="binding site" evidence="1">
    <location>
        <position position="222"/>
    </location>
    <ligand>
        <name>substrate</name>
    </ligand>
</feature>
<proteinExistence type="inferred from homology"/>
<keyword id="KW-0119">Carbohydrate metabolism</keyword>
<keyword id="KW-0326">Glycosidase</keyword>
<keyword id="KW-0378">Hydrolase</keyword>
<name>SCRB_PEDPE</name>